<evidence type="ECO:0000250" key="1">
    <source>
        <dbReference type="UniProtKB" id="Q53GI3"/>
    </source>
</evidence>
<evidence type="ECO:0000255" key="2">
    <source>
        <dbReference type="PROSITE-ProRule" id="PRU00042"/>
    </source>
</evidence>
<evidence type="ECO:0000255" key="3">
    <source>
        <dbReference type="PROSITE-ProRule" id="PRU00187"/>
    </source>
</evidence>
<evidence type="ECO:0000256" key="4">
    <source>
        <dbReference type="SAM" id="MobiDB-lite"/>
    </source>
</evidence>
<evidence type="ECO:0000269" key="5">
    <source>
    </source>
</evidence>
<evidence type="ECO:0000305" key="6"/>
<gene>
    <name type="primary">Znf394</name>
    <name type="synonym">Zfp94</name>
    <name type="synonym">Zfp99</name>
    <name type="synonym">Zkscan14</name>
</gene>
<proteinExistence type="evidence at transcript level"/>
<sequence length="521" mass="59038">MAAGSGVVPPPLGAGLCTVKVEEDSPGNQESSGSGDWQNPETSRKQFRQLRYQEVAGPEEALSRLWELCRRWLRPELLSKEQIMELLVLEQFLTILPQELQAYVRDHSPESGEEAAALARTLQRALDRASPQGFMTFKDVAESLTWEEWEQLAAARKGFCEESTKDAGSTVVPGLETRTVNTDVILKQEILKEAEPQAWLQEVSQGMVPALTKCGDPSEDWEEKLPKAAVLLQLQGSEEQGRTAIPLLIGVSREERDSKNNESENSGSSVLGQHIQTAEGLGTNSQCGDDHKQGFHVKCHSVKPHSSVDSAVGLLETQRQFQEDKPYKCDSCEKGFRQRSDLFKHQRIHTGEKPYQCQECGKRFSQSAALVKHQRTHTGEKPYACPECGECFRQSSHLSRHQRTHASEKYYKCEECGEIVHVSSLFRHQRLHRGERPYKCGDCEKSFRQRSDLFKHQRTHTGEKPYACVVCGRRFSQSATLIKHQRTHTGEKPYKCFQCGERFRQSTHLVRHQRIHQNSVS</sequence>
<keyword id="KW-0238">DNA-binding</keyword>
<keyword id="KW-1017">Isopeptide bond</keyword>
<keyword id="KW-0479">Metal-binding</keyword>
<keyword id="KW-0539">Nucleus</keyword>
<keyword id="KW-1185">Reference proteome</keyword>
<keyword id="KW-0677">Repeat</keyword>
<keyword id="KW-0804">Transcription</keyword>
<keyword id="KW-0805">Transcription regulation</keyword>
<keyword id="KW-0832">Ubl conjugation</keyword>
<keyword id="KW-0862">Zinc</keyword>
<keyword id="KW-0863">Zinc-finger</keyword>
<accession>Q9Z1D9</accession>
<accession>B9EIZ4</accession>
<accession>Q3U4Z1</accession>
<accession>Q9CYV9</accession>
<accession>Q9CZG8</accession>
<comment type="function">
    <text>May be involved in transcriptional regulation.</text>
</comment>
<comment type="subcellular location">
    <subcellularLocation>
        <location evidence="3">Nucleus</location>
    </subcellularLocation>
</comment>
<comment type="tissue specificity">
    <text evidence="5">Expressed at high level in testis.</text>
</comment>
<comment type="similarity">
    <text evidence="6">Belongs to the krueppel C2H2-type zinc-finger protein family.</text>
</comment>
<comment type="sequence caution" evidence="6">
    <conflict type="frameshift">
        <sequence resource="EMBL-CDS" id="BAB28368"/>
    </conflict>
</comment>
<protein>
    <recommendedName>
        <fullName>Zinc finger protein 394</fullName>
    </recommendedName>
    <alternativeName>
        <fullName>Zinc finger protein 94</fullName>
        <shortName>Zfp-94</shortName>
    </alternativeName>
    <alternativeName>
        <fullName>Zinc finger protein with KRAB and SCAN domains 14</fullName>
    </alternativeName>
</protein>
<feature type="chain" id="PRO_0000047558" description="Zinc finger protein 394">
    <location>
        <begin position="1"/>
        <end position="521"/>
    </location>
</feature>
<feature type="domain" description="SCAN box" evidence="3">
    <location>
        <begin position="38"/>
        <end position="133"/>
    </location>
</feature>
<feature type="domain" description="KRAB">
    <location>
        <begin position="135"/>
        <end position="196"/>
    </location>
</feature>
<feature type="zinc finger region" description="C2H2-type 1" evidence="2">
    <location>
        <begin position="327"/>
        <end position="349"/>
    </location>
</feature>
<feature type="zinc finger region" description="C2H2-type 2" evidence="2">
    <location>
        <begin position="355"/>
        <end position="377"/>
    </location>
</feature>
<feature type="zinc finger region" description="C2H2-type 3" evidence="2">
    <location>
        <begin position="383"/>
        <end position="405"/>
    </location>
</feature>
<feature type="zinc finger region" description="C2H2-type 4; atypical" evidence="2">
    <location>
        <begin position="411"/>
        <end position="432"/>
    </location>
</feature>
<feature type="zinc finger region" description="C2H2-type 5" evidence="2">
    <location>
        <begin position="438"/>
        <end position="460"/>
    </location>
</feature>
<feature type="zinc finger region" description="C2H2-type 6" evidence="2">
    <location>
        <begin position="466"/>
        <end position="488"/>
    </location>
</feature>
<feature type="zinc finger region" description="C2H2-type 7" evidence="2">
    <location>
        <begin position="494"/>
        <end position="516"/>
    </location>
</feature>
<feature type="region of interest" description="Disordered" evidence="4">
    <location>
        <begin position="1"/>
        <end position="45"/>
    </location>
</feature>
<feature type="compositionally biased region" description="Polar residues" evidence="4">
    <location>
        <begin position="26"/>
        <end position="41"/>
    </location>
</feature>
<feature type="cross-link" description="Glycyl lysine isopeptide (Lys-Gly) (interchain with G-Cter in SUMO2)" evidence="1">
    <location>
        <position position="20"/>
    </location>
</feature>
<feature type="cross-link" description="Glycyl lysine isopeptide (Lys-Gly) (interchain with G-Cter in SUMO2)" evidence="1">
    <location>
        <position position="259"/>
    </location>
</feature>
<feature type="cross-link" description="Glycyl lysine isopeptide (Lys-Gly) (interchain with G-Cter in SUMO2)" evidence="1">
    <location>
        <position position="412"/>
    </location>
</feature>
<feature type="sequence conflict" description="In Ref. 1; AAD00102." evidence="6" ref="1">
    <original>G</original>
    <variation>R</variation>
    <location>
        <position position="112"/>
    </location>
</feature>
<feature type="sequence conflict" description="In Ref. 1; AAD00102." evidence="6" ref="1">
    <original>LA</original>
    <variation>W</variation>
    <location>
        <begin position="118"/>
        <end position="119"/>
    </location>
</feature>
<feature type="sequence conflict" description="In Ref. 1; AAD00102." evidence="6" ref="1">
    <original>AEPQAW</original>
    <variation>QSHRSC</variation>
    <location>
        <begin position="194"/>
        <end position="199"/>
    </location>
</feature>
<feature type="sequence conflict" description="In Ref. 2; BAB28368/BAB28752." evidence="6" ref="2">
    <original>K</original>
    <variation>R</variation>
    <location>
        <position position="483"/>
    </location>
</feature>
<feature type="sequence conflict" description="In Ref. 2; BAE32289." evidence="6" ref="2">
    <original>HQR</original>
    <variation>NQS</variation>
    <location>
        <begin position="484"/>
        <end position="486"/>
    </location>
</feature>
<organism>
    <name type="scientific">Mus musculus</name>
    <name type="common">Mouse</name>
    <dbReference type="NCBI Taxonomy" id="10090"/>
    <lineage>
        <taxon>Eukaryota</taxon>
        <taxon>Metazoa</taxon>
        <taxon>Chordata</taxon>
        <taxon>Craniata</taxon>
        <taxon>Vertebrata</taxon>
        <taxon>Euteleostomi</taxon>
        <taxon>Mammalia</taxon>
        <taxon>Eutheria</taxon>
        <taxon>Euarchontoglires</taxon>
        <taxon>Glires</taxon>
        <taxon>Rodentia</taxon>
        <taxon>Myomorpha</taxon>
        <taxon>Muroidea</taxon>
        <taxon>Muridae</taxon>
        <taxon>Murinae</taxon>
        <taxon>Mus</taxon>
        <taxon>Mus</taxon>
    </lineage>
</organism>
<reference key="1">
    <citation type="journal article" date="2003" name="FEBS Lett.">
        <title>Three novel spermatogenesis-specific zinc finger genes.</title>
        <authorList>
            <person name="Weissig H."/>
            <person name="Narisawa S."/>
            <person name="Sikstrom C."/>
            <person name="Olsson P.G."/>
            <person name="McCarrey J.R."/>
            <person name="Tsonis P.A."/>
            <person name="Del Rio-Tsonis K."/>
            <person name="Millan J.L."/>
        </authorList>
    </citation>
    <scope>NUCLEOTIDE SEQUENCE [MRNA]</scope>
    <scope>TISSUE SPECIFICITY</scope>
</reference>
<reference key="2">
    <citation type="journal article" date="2005" name="Science">
        <title>The transcriptional landscape of the mammalian genome.</title>
        <authorList>
            <person name="Carninci P."/>
            <person name="Kasukawa T."/>
            <person name="Katayama S."/>
            <person name="Gough J."/>
            <person name="Frith M.C."/>
            <person name="Maeda N."/>
            <person name="Oyama R."/>
            <person name="Ravasi T."/>
            <person name="Lenhard B."/>
            <person name="Wells C."/>
            <person name="Kodzius R."/>
            <person name="Shimokawa K."/>
            <person name="Bajic V.B."/>
            <person name="Brenner S.E."/>
            <person name="Batalov S."/>
            <person name="Forrest A.R."/>
            <person name="Zavolan M."/>
            <person name="Davis M.J."/>
            <person name="Wilming L.G."/>
            <person name="Aidinis V."/>
            <person name="Allen J.E."/>
            <person name="Ambesi-Impiombato A."/>
            <person name="Apweiler R."/>
            <person name="Aturaliya R.N."/>
            <person name="Bailey T.L."/>
            <person name="Bansal M."/>
            <person name="Baxter L."/>
            <person name="Beisel K.W."/>
            <person name="Bersano T."/>
            <person name="Bono H."/>
            <person name="Chalk A.M."/>
            <person name="Chiu K.P."/>
            <person name="Choudhary V."/>
            <person name="Christoffels A."/>
            <person name="Clutterbuck D.R."/>
            <person name="Crowe M.L."/>
            <person name="Dalla E."/>
            <person name="Dalrymple B.P."/>
            <person name="de Bono B."/>
            <person name="Della Gatta G."/>
            <person name="di Bernardo D."/>
            <person name="Down T."/>
            <person name="Engstrom P."/>
            <person name="Fagiolini M."/>
            <person name="Faulkner G."/>
            <person name="Fletcher C.F."/>
            <person name="Fukushima T."/>
            <person name="Furuno M."/>
            <person name="Futaki S."/>
            <person name="Gariboldi M."/>
            <person name="Georgii-Hemming P."/>
            <person name="Gingeras T.R."/>
            <person name="Gojobori T."/>
            <person name="Green R.E."/>
            <person name="Gustincich S."/>
            <person name="Harbers M."/>
            <person name="Hayashi Y."/>
            <person name="Hensch T.K."/>
            <person name="Hirokawa N."/>
            <person name="Hill D."/>
            <person name="Huminiecki L."/>
            <person name="Iacono M."/>
            <person name="Ikeo K."/>
            <person name="Iwama A."/>
            <person name="Ishikawa T."/>
            <person name="Jakt M."/>
            <person name="Kanapin A."/>
            <person name="Katoh M."/>
            <person name="Kawasawa Y."/>
            <person name="Kelso J."/>
            <person name="Kitamura H."/>
            <person name="Kitano H."/>
            <person name="Kollias G."/>
            <person name="Krishnan S.P."/>
            <person name="Kruger A."/>
            <person name="Kummerfeld S.K."/>
            <person name="Kurochkin I.V."/>
            <person name="Lareau L.F."/>
            <person name="Lazarevic D."/>
            <person name="Lipovich L."/>
            <person name="Liu J."/>
            <person name="Liuni S."/>
            <person name="McWilliam S."/>
            <person name="Madan Babu M."/>
            <person name="Madera M."/>
            <person name="Marchionni L."/>
            <person name="Matsuda H."/>
            <person name="Matsuzawa S."/>
            <person name="Miki H."/>
            <person name="Mignone F."/>
            <person name="Miyake S."/>
            <person name="Morris K."/>
            <person name="Mottagui-Tabar S."/>
            <person name="Mulder N."/>
            <person name="Nakano N."/>
            <person name="Nakauchi H."/>
            <person name="Ng P."/>
            <person name="Nilsson R."/>
            <person name="Nishiguchi S."/>
            <person name="Nishikawa S."/>
            <person name="Nori F."/>
            <person name="Ohara O."/>
            <person name="Okazaki Y."/>
            <person name="Orlando V."/>
            <person name="Pang K.C."/>
            <person name="Pavan W.J."/>
            <person name="Pavesi G."/>
            <person name="Pesole G."/>
            <person name="Petrovsky N."/>
            <person name="Piazza S."/>
            <person name="Reed J."/>
            <person name="Reid J.F."/>
            <person name="Ring B.Z."/>
            <person name="Ringwald M."/>
            <person name="Rost B."/>
            <person name="Ruan Y."/>
            <person name="Salzberg S.L."/>
            <person name="Sandelin A."/>
            <person name="Schneider C."/>
            <person name="Schoenbach C."/>
            <person name="Sekiguchi K."/>
            <person name="Semple C.A."/>
            <person name="Seno S."/>
            <person name="Sessa L."/>
            <person name="Sheng Y."/>
            <person name="Shibata Y."/>
            <person name="Shimada H."/>
            <person name="Shimada K."/>
            <person name="Silva D."/>
            <person name="Sinclair B."/>
            <person name="Sperling S."/>
            <person name="Stupka E."/>
            <person name="Sugiura K."/>
            <person name="Sultana R."/>
            <person name="Takenaka Y."/>
            <person name="Taki K."/>
            <person name="Tammoja K."/>
            <person name="Tan S.L."/>
            <person name="Tang S."/>
            <person name="Taylor M.S."/>
            <person name="Tegner J."/>
            <person name="Teichmann S.A."/>
            <person name="Ueda H.R."/>
            <person name="van Nimwegen E."/>
            <person name="Verardo R."/>
            <person name="Wei C.L."/>
            <person name="Yagi K."/>
            <person name="Yamanishi H."/>
            <person name="Zabarovsky E."/>
            <person name="Zhu S."/>
            <person name="Zimmer A."/>
            <person name="Hide W."/>
            <person name="Bult C."/>
            <person name="Grimmond S.M."/>
            <person name="Teasdale R.D."/>
            <person name="Liu E.T."/>
            <person name="Brusic V."/>
            <person name="Quackenbush J."/>
            <person name="Wahlestedt C."/>
            <person name="Mattick J.S."/>
            <person name="Hume D.A."/>
            <person name="Kai C."/>
            <person name="Sasaki D."/>
            <person name="Tomaru Y."/>
            <person name="Fukuda S."/>
            <person name="Kanamori-Katayama M."/>
            <person name="Suzuki M."/>
            <person name="Aoki J."/>
            <person name="Arakawa T."/>
            <person name="Iida J."/>
            <person name="Imamura K."/>
            <person name="Itoh M."/>
            <person name="Kato T."/>
            <person name="Kawaji H."/>
            <person name="Kawagashira N."/>
            <person name="Kawashima T."/>
            <person name="Kojima M."/>
            <person name="Kondo S."/>
            <person name="Konno H."/>
            <person name="Nakano K."/>
            <person name="Ninomiya N."/>
            <person name="Nishio T."/>
            <person name="Okada M."/>
            <person name="Plessy C."/>
            <person name="Shibata K."/>
            <person name="Shiraki T."/>
            <person name="Suzuki S."/>
            <person name="Tagami M."/>
            <person name="Waki K."/>
            <person name="Watahiki A."/>
            <person name="Okamura-Oho Y."/>
            <person name="Suzuki H."/>
            <person name="Kawai J."/>
            <person name="Hayashizaki Y."/>
        </authorList>
    </citation>
    <scope>NUCLEOTIDE SEQUENCE [LARGE SCALE MRNA]</scope>
    <source>
        <strain>C57BL/6J</strain>
        <strain>NOD</strain>
        <tissue>Embryo</tissue>
        <tissue>Thymus</tissue>
    </source>
</reference>
<reference key="3">
    <citation type="submission" date="2005-09" db="EMBL/GenBank/DDBJ databases">
        <authorList>
            <person name="Mural R.J."/>
            <person name="Adams M.D."/>
            <person name="Myers E.W."/>
            <person name="Smith H.O."/>
            <person name="Venter J.C."/>
        </authorList>
    </citation>
    <scope>NUCLEOTIDE SEQUENCE [LARGE SCALE GENOMIC DNA]</scope>
</reference>
<reference key="4">
    <citation type="journal article" date="2004" name="Genome Res.">
        <title>The status, quality, and expansion of the NIH full-length cDNA project: the Mammalian Gene Collection (MGC).</title>
        <authorList>
            <consortium name="The MGC Project Team"/>
        </authorList>
    </citation>
    <scope>NUCLEOTIDE SEQUENCE [LARGE SCALE MRNA]</scope>
    <source>
        <tissue>Brain</tissue>
    </source>
</reference>
<name>ZN394_MOUSE</name>
<dbReference type="EMBL" id="U62906">
    <property type="protein sequence ID" value="AAD00102.1"/>
    <property type="molecule type" value="mRNA"/>
</dbReference>
<dbReference type="EMBL" id="AK012630">
    <property type="protein sequence ID" value="BAB28368.1"/>
    <property type="status" value="ALT_FRAME"/>
    <property type="molecule type" value="mRNA"/>
</dbReference>
<dbReference type="EMBL" id="AK013258">
    <property type="protein sequence ID" value="BAB28752.1"/>
    <property type="molecule type" value="mRNA"/>
</dbReference>
<dbReference type="EMBL" id="AK153972">
    <property type="protein sequence ID" value="BAE32289.1"/>
    <property type="molecule type" value="mRNA"/>
</dbReference>
<dbReference type="EMBL" id="CH466529">
    <property type="protein sequence ID" value="EDL18989.1"/>
    <property type="molecule type" value="Genomic_DNA"/>
</dbReference>
<dbReference type="EMBL" id="BC141244">
    <property type="protein sequence ID" value="AAI41245.1"/>
    <property type="molecule type" value="mRNA"/>
</dbReference>
<dbReference type="CCDS" id="CCDS19860.1"/>
<dbReference type="RefSeq" id="NP_075811.2">
    <property type="nucleotide sequence ID" value="NM_023322.2"/>
</dbReference>
<dbReference type="SMR" id="Q9Z1D9"/>
<dbReference type="BioGRID" id="212036">
    <property type="interactions" value="1"/>
</dbReference>
<dbReference type="FunCoup" id="Q9Z1D9">
    <property type="interactions" value="321"/>
</dbReference>
<dbReference type="IntAct" id="Q9Z1D9">
    <property type="interactions" value="1"/>
</dbReference>
<dbReference type="STRING" id="10090.ENSMUSP00000031632"/>
<dbReference type="iPTMnet" id="Q9Z1D9"/>
<dbReference type="PhosphoSitePlus" id="Q9Z1D9"/>
<dbReference type="jPOST" id="Q9Z1D9"/>
<dbReference type="PaxDb" id="10090-ENSMUSP00000031632"/>
<dbReference type="ProteomicsDB" id="302082"/>
<dbReference type="Antibodypedia" id="16184">
    <property type="antibodies" value="231 antibodies from 25 providers"/>
</dbReference>
<dbReference type="DNASU" id="67235"/>
<dbReference type="Ensembl" id="ENSMUST00000031632.9">
    <property type="protein sequence ID" value="ENSMUSP00000031632.9"/>
    <property type="gene ID" value="ENSMUSG00000029627.13"/>
</dbReference>
<dbReference type="GeneID" id="67235"/>
<dbReference type="KEGG" id="mmu:67235"/>
<dbReference type="UCSC" id="uc009amm.1">
    <property type="organism name" value="mouse"/>
</dbReference>
<dbReference type="AGR" id="MGI:1914485"/>
<dbReference type="CTD" id="67235"/>
<dbReference type="MGI" id="MGI:1914485">
    <property type="gene designation" value="Zkscan14"/>
</dbReference>
<dbReference type="VEuPathDB" id="HostDB:ENSMUSG00000029627"/>
<dbReference type="eggNOG" id="KOG1721">
    <property type="taxonomic scope" value="Eukaryota"/>
</dbReference>
<dbReference type="GeneTree" id="ENSGT00940000162347"/>
<dbReference type="HOGENOM" id="CLU_002678_49_3_1"/>
<dbReference type="InParanoid" id="Q9Z1D9"/>
<dbReference type="OMA" id="ETCHISH"/>
<dbReference type="OrthoDB" id="6077919at2759"/>
<dbReference type="PhylomeDB" id="Q9Z1D9"/>
<dbReference type="TreeFam" id="TF338304"/>
<dbReference type="Reactome" id="R-MMU-212436">
    <property type="pathway name" value="Generic Transcription Pathway"/>
</dbReference>
<dbReference type="BioGRID-ORCS" id="67235">
    <property type="hits" value="0 hits in 76 CRISPR screens"/>
</dbReference>
<dbReference type="ChiTaRS" id="Zkscan14">
    <property type="organism name" value="mouse"/>
</dbReference>
<dbReference type="PRO" id="PR:Q9Z1D9"/>
<dbReference type="Proteomes" id="UP000000589">
    <property type="component" value="Chromosome 5"/>
</dbReference>
<dbReference type="RNAct" id="Q9Z1D9">
    <property type="molecule type" value="protein"/>
</dbReference>
<dbReference type="Bgee" id="ENSMUSG00000029627">
    <property type="expression patterns" value="Expressed in primary oocyte and 236 other cell types or tissues"/>
</dbReference>
<dbReference type="ExpressionAtlas" id="Q9Z1D9">
    <property type="expression patterns" value="baseline and differential"/>
</dbReference>
<dbReference type="GO" id="GO:0005634">
    <property type="term" value="C:nucleus"/>
    <property type="evidence" value="ECO:0007669"/>
    <property type="project" value="UniProtKB-SubCell"/>
</dbReference>
<dbReference type="GO" id="GO:0003677">
    <property type="term" value="F:DNA binding"/>
    <property type="evidence" value="ECO:0007669"/>
    <property type="project" value="UniProtKB-KW"/>
</dbReference>
<dbReference type="GO" id="GO:0008270">
    <property type="term" value="F:zinc ion binding"/>
    <property type="evidence" value="ECO:0007669"/>
    <property type="project" value="UniProtKB-KW"/>
</dbReference>
<dbReference type="GO" id="GO:0006355">
    <property type="term" value="P:regulation of DNA-templated transcription"/>
    <property type="evidence" value="ECO:0007669"/>
    <property type="project" value="InterPro"/>
</dbReference>
<dbReference type="CDD" id="cd07765">
    <property type="entry name" value="KRAB_A-box"/>
    <property type="match status" value="1"/>
</dbReference>
<dbReference type="CDD" id="cd07936">
    <property type="entry name" value="SCAN"/>
    <property type="match status" value="1"/>
</dbReference>
<dbReference type="FunFam" id="3.30.160.60:FF:000250">
    <property type="entry name" value="zinc finger protein 197 isoform X1"/>
    <property type="match status" value="2"/>
</dbReference>
<dbReference type="FunFam" id="1.10.4020.10:FF:000001">
    <property type="entry name" value="zinc finger protein 263 isoform X1"/>
    <property type="match status" value="1"/>
</dbReference>
<dbReference type="FunFam" id="3.30.160.60:FF:002343">
    <property type="entry name" value="Zinc finger protein 33A"/>
    <property type="match status" value="1"/>
</dbReference>
<dbReference type="FunFam" id="3.30.160.60:FF:001234">
    <property type="entry name" value="Zinc finger protein 394"/>
    <property type="match status" value="2"/>
</dbReference>
<dbReference type="FunFam" id="3.30.160.60:FF:000953">
    <property type="entry name" value="Zinc finger protein 691"/>
    <property type="match status" value="1"/>
</dbReference>
<dbReference type="Gene3D" id="3.30.160.60">
    <property type="entry name" value="Classic Zinc Finger"/>
    <property type="match status" value="7"/>
</dbReference>
<dbReference type="Gene3D" id="1.10.4020.10">
    <property type="entry name" value="DNA breaking-rejoining enzymes"/>
    <property type="match status" value="1"/>
</dbReference>
<dbReference type="InterPro" id="IPR001909">
    <property type="entry name" value="KRAB"/>
</dbReference>
<dbReference type="InterPro" id="IPR036051">
    <property type="entry name" value="KRAB_dom_sf"/>
</dbReference>
<dbReference type="InterPro" id="IPR003309">
    <property type="entry name" value="SCAN_dom"/>
</dbReference>
<dbReference type="InterPro" id="IPR038269">
    <property type="entry name" value="SCAN_sf"/>
</dbReference>
<dbReference type="InterPro" id="IPR036236">
    <property type="entry name" value="Znf_C2H2_sf"/>
</dbReference>
<dbReference type="InterPro" id="IPR013087">
    <property type="entry name" value="Znf_C2H2_type"/>
</dbReference>
<dbReference type="PANTHER" id="PTHR23226:SF416">
    <property type="entry name" value="FI01424P"/>
    <property type="match status" value="1"/>
</dbReference>
<dbReference type="PANTHER" id="PTHR23226">
    <property type="entry name" value="ZINC FINGER AND SCAN DOMAIN-CONTAINING"/>
    <property type="match status" value="1"/>
</dbReference>
<dbReference type="Pfam" id="PF01352">
    <property type="entry name" value="KRAB"/>
    <property type="match status" value="1"/>
</dbReference>
<dbReference type="Pfam" id="PF02023">
    <property type="entry name" value="SCAN"/>
    <property type="match status" value="1"/>
</dbReference>
<dbReference type="Pfam" id="PF00096">
    <property type="entry name" value="zf-C2H2"/>
    <property type="match status" value="6"/>
</dbReference>
<dbReference type="SMART" id="SM00349">
    <property type="entry name" value="KRAB"/>
    <property type="match status" value="1"/>
</dbReference>
<dbReference type="SMART" id="SM00431">
    <property type="entry name" value="SCAN"/>
    <property type="match status" value="1"/>
</dbReference>
<dbReference type="SMART" id="SM00355">
    <property type="entry name" value="ZnF_C2H2"/>
    <property type="match status" value="7"/>
</dbReference>
<dbReference type="SUPFAM" id="SSF57667">
    <property type="entry name" value="beta-beta-alpha zinc fingers"/>
    <property type="match status" value="4"/>
</dbReference>
<dbReference type="SUPFAM" id="SSF109640">
    <property type="entry name" value="KRAB domain (Kruppel-associated box)"/>
    <property type="match status" value="1"/>
</dbReference>
<dbReference type="SUPFAM" id="SSF47353">
    <property type="entry name" value="Retrovirus capsid dimerization domain-like"/>
    <property type="match status" value="1"/>
</dbReference>
<dbReference type="PROSITE" id="PS50804">
    <property type="entry name" value="SCAN_BOX"/>
    <property type="match status" value="1"/>
</dbReference>
<dbReference type="PROSITE" id="PS00028">
    <property type="entry name" value="ZINC_FINGER_C2H2_1"/>
    <property type="match status" value="6"/>
</dbReference>
<dbReference type="PROSITE" id="PS50157">
    <property type="entry name" value="ZINC_FINGER_C2H2_2"/>
    <property type="match status" value="7"/>
</dbReference>